<gene>
    <name evidence="1" type="primary">MPH1</name>
    <name type="ordered locus">CAGL0J01980g</name>
</gene>
<protein>
    <recommendedName>
        <fullName evidence="1">ATP-dependent DNA helicase MPH1</fullName>
        <ecNumber evidence="1 2">3.6.4.12</ecNumber>
    </recommendedName>
    <alternativeName>
        <fullName evidence="2">FANCM-like protein 1</fullName>
    </alternativeName>
</protein>
<organism>
    <name type="scientific">Candida glabrata (strain ATCC 2001 / BCRC 20586 / JCM 3761 / NBRC 0622 / NRRL Y-65 / CBS 138)</name>
    <name type="common">Yeast</name>
    <name type="synonym">Nakaseomyces glabratus</name>
    <dbReference type="NCBI Taxonomy" id="284593"/>
    <lineage>
        <taxon>Eukaryota</taxon>
        <taxon>Fungi</taxon>
        <taxon>Dikarya</taxon>
        <taxon>Ascomycota</taxon>
        <taxon>Saccharomycotina</taxon>
        <taxon>Saccharomycetes</taxon>
        <taxon>Saccharomycetales</taxon>
        <taxon>Saccharomycetaceae</taxon>
        <taxon>Nakaseomyces</taxon>
    </lineage>
</organism>
<dbReference type="EC" id="3.6.4.12" evidence="1 2"/>
<dbReference type="EMBL" id="CR380956">
    <property type="protein sequence ID" value="CAG60740.1"/>
    <property type="molecule type" value="Genomic_DNA"/>
</dbReference>
<dbReference type="RefSeq" id="XP_447791.1">
    <property type="nucleotide sequence ID" value="XM_447791.1"/>
</dbReference>
<dbReference type="SMR" id="Q6FPQ3"/>
<dbReference type="FunCoup" id="Q6FPQ3">
    <property type="interactions" value="274"/>
</dbReference>
<dbReference type="STRING" id="284593.Q6FPQ3"/>
<dbReference type="EnsemblFungi" id="CAGL0J01980g-T">
    <property type="protein sequence ID" value="CAGL0J01980g-T-p1"/>
    <property type="gene ID" value="CAGL0J01980g"/>
</dbReference>
<dbReference type="KEGG" id="cgr:2889816"/>
<dbReference type="CGD" id="CAL0133376">
    <property type="gene designation" value="CAGL0J01980g"/>
</dbReference>
<dbReference type="VEuPathDB" id="FungiDB:CAGL0J01980g"/>
<dbReference type="eggNOG" id="KOG0354">
    <property type="taxonomic scope" value="Eukaryota"/>
</dbReference>
<dbReference type="HOGENOM" id="CLU_002513_1_0_1"/>
<dbReference type="InParanoid" id="Q6FPQ3"/>
<dbReference type="OMA" id="EGIKWRN"/>
<dbReference type="Proteomes" id="UP000002428">
    <property type="component" value="Chromosome J"/>
</dbReference>
<dbReference type="GO" id="GO:0005634">
    <property type="term" value="C:nucleus"/>
    <property type="evidence" value="ECO:0007669"/>
    <property type="project" value="UniProtKB-SubCell"/>
</dbReference>
<dbReference type="GO" id="GO:0043138">
    <property type="term" value="F:3'-5' DNA helicase activity"/>
    <property type="evidence" value="ECO:0007669"/>
    <property type="project" value="EnsemblFungi"/>
</dbReference>
<dbReference type="GO" id="GO:0005524">
    <property type="term" value="F:ATP binding"/>
    <property type="evidence" value="ECO:0007669"/>
    <property type="project" value="UniProtKB-KW"/>
</dbReference>
<dbReference type="GO" id="GO:0016887">
    <property type="term" value="F:ATP hydrolysis activity"/>
    <property type="evidence" value="ECO:0007669"/>
    <property type="project" value="RHEA"/>
</dbReference>
<dbReference type="GO" id="GO:0033677">
    <property type="term" value="F:DNA/RNA helicase activity"/>
    <property type="evidence" value="ECO:0007669"/>
    <property type="project" value="EnsemblFungi"/>
</dbReference>
<dbReference type="GO" id="GO:0070336">
    <property type="term" value="F:flap-structured DNA binding"/>
    <property type="evidence" value="ECO:0007669"/>
    <property type="project" value="EnsemblFungi"/>
</dbReference>
<dbReference type="GO" id="GO:0000400">
    <property type="term" value="F:four-way junction DNA binding"/>
    <property type="evidence" value="ECO:0007669"/>
    <property type="project" value="TreeGrafter"/>
</dbReference>
<dbReference type="GO" id="GO:0009378">
    <property type="term" value="F:four-way junction helicase activity"/>
    <property type="evidence" value="ECO:0007669"/>
    <property type="project" value="TreeGrafter"/>
</dbReference>
<dbReference type="GO" id="GO:0033567">
    <property type="term" value="P:DNA replication, Okazaki fragment processing"/>
    <property type="evidence" value="ECO:0007669"/>
    <property type="project" value="EnsemblFungi"/>
</dbReference>
<dbReference type="GO" id="GO:0007535">
    <property type="term" value="P:donor selection"/>
    <property type="evidence" value="ECO:0007669"/>
    <property type="project" value="EnsemblFungi"/>
</dbReference>
<dbReference type="GO" id="GO:0045003">
    <property type="term" value="P:double-strand break repair via synthesis-dependent strand annealing"/>
    <property type="evidence" value="ECO:0007669"/>
    <property type="project" value="TreeGrafter"/>
</dbReference>
<dbReference type="GO" id="GO:0036297">
    <property type="term" value="P:interstrand cross-link repair"/>
    <property type="evidence" value="ECO:0007669"/>
    <property type="project" value="EnsemblFungi"/>
</dbReference>
<dbReference type="GO" id="GO:0060543">
    <property type="term" value="P:negative regulation of strand invasion"/>
    <property type="evidence" value="ECO:0007669"/>
    <property type="project" value="EnsemblFungi"/>
</dbReference>
<dbReference type="CDD" id="cd18033">
    <property type="entry name" value="DEXDc_FANCM"/>
    <property type="match status" value="1"/>
</dbReference>
<dbReference type="CDD" id="cd12091">
    <property type="entry name" value="FANCM_ID"/>
    <property type="match status" value="1"/>
</dbReference>
<dbReference type="FunFam" id="3.40.50.300:FF:000861">
    <property type="entry name" value="Fanconi anemia, complementation group M"/>
    <property type="match status" value="1"/>
</dbReference>
<dbReference type="Gene3D" id="3.40.50.300">
    <property type="entry name" value="P-loop containing nucleotide triphosphate hydrolases"/>
    <property type="match status" value="2"/>
</dbReference>
<dbReference type="InterPro" id="IPR039686">
    <property type="entry name" value="FANCM/Mph1-like_ID"/>
</dbReference>
<dbReference type="InterPro" id="IPR044749">
    <property type="entry name" value="FANCM_DEXDc"/>
</dbReference>
<dbReference type="InterPro" id="IPR006935">
    <property type="entry name" value="Helicase/UvrB_N"/>
</dbReference>
<dbReference type="InterPro" id="IPR014001">
    <property type="entry name" value="Helicase_ATP-bd"/>
</dbReference>
<dbReference type="InterPro" id="IPR001650">
    <property type="entry name" value="Helicase_C-like"/>
</dbReference>
<dbReference type="InterPro" id="IPR027417">
    <property type="entry name" value="P-loop_NTPase"/>
</dbReference>
<dbReference type="PANTHER" id="PTHR14025">
    <property type="entry name" value="FANCONI ANEMIA GROUP M FANCM FAMILY MEMBER"/>
    <property type="match status" value="1"/>
</dbReference>
<dbReference type="PANTHER" id="PTHR14025:SF20">
    <property type="entry name" value="FANCONI ANEMIA GROUP M PROTEIN"/>
    <property type="match status" value="1"/>
</dbReference>
<dbReference type="Pfam" id="PF00271">
    <property type="entry name" value="Helicase_C"/>
    <property type="match status" value="1"/>
</dbReference>
<dbReference type="Pfam" id="PF04851">
    <property type="entry name" value="ResIII"/>
    <property type="match status" value="1"/>
</dbReference>
<dbReference type="SMART" id="SM00487">
    <property type="entry name" value="DEXDc"/>
    <property type="match status" value="1"/>
</dbReference>
<dbReference type="SMART" id="SM00490">
    <property type="entry name" value="HELICc"/>
    <property type="match status" value="1"/>
</dbReference>
<dbReference type="SUPFAM" id="SSF52540">
    <property type="entry name" value="P-loop containing nucleoside triphosphate hydrolases"/>
    <property type="match status" value="1"/>
</dbReference>
<dbReference type="PROSITE" id="PS51192">
    <property type="entry name" value="HELICASE_ATP_BIND_1"/>
    <property type="match status" value="1"/>
</dbReference>
<dbReference type="PROSITE" id="PS51194">
    <property type="entry name" value="HELICASE_CTER"/>
    <property type="match status" value="1"/>
</dbReference>
<feature type="chain" id="PRO_0000333371" description="ATP-dependent DNA helicase MPH1">
    <location>
        <begin position="1"/>
        <end position="1052"/>
    </location>
</feature>
<feature type="domain" description="Helicase ATP-binding" evidence="3">
    <location>
        <begin position="89"/>
        <end position="256"/>
    </location>
</feature>
<feature type="domain" description="Helicase C-terminal" evidence="4">
    <location>
        <begin position="432"/>
        <end position="649"/>
    </location>
</feature>
<feature type="region of interest" description="Disordered" evidence="5">
    <location>
        <begin position="495"/>
        <end position="550"/>
    </location>
</feature>
<feature type="region of interest" description="Disordered" evidence="5">
    <location>
        <begin position="798"/>
        <end position="832"/>
    </location>
</feature>
<feature type="region of interest" description="Disordered" evidence="5">
    <location>
        <begin position="869"/>
        <end position="898"/>
    </location>
</feature>
<feature type="region of interest" description="Disordered" evidence="5">
    <location>
        <begin position="1002"/>
        <end position="1052"/>
    </location>
</feature>
<feature type="short sequence motif" description="DEAH box" evidence="3">
    <location>
        <begin position="204"/>
        <end position="207"/>
    </location>
</feature>
<feature type="compositionally biased region" description="Basic and acidic residues" evidence="5">
    <location>
        <begin position="503"/>
        <end position="532"/>
    </location>
</feature>
<feature type="compositionally biased region" description="Polar residues" evidence="5">
    <location>
        <begin position="534"/>
        <end position="549"/>
    </location>
</feature>
<feature type="compositionally biased region" description="Low complexity" evidence="5">
    <location>
        <begin position="875"/>
        <end position="898"/>
    </location>
</feature>
<feature type="compositionally biased region" description="Low complexity" evidence="5">
    <location>
        <begin position="1005"/>
        <end position="1028"/>
    </location>
</feature>
<feature type="compositionally biased region" description="Basic and acidic residues" evidence="5">
    <location>
        <begin position="1029"/>
        <end position="1040"/>
    </location>
</feature>
<feature type="compositionally biased region" description="Acidic residues" evidence="5">
    <location>
        <begin position="1043"/>
        <end position="1052"/>
    </location>
</feature>
<feature type="binding site" evidence="3">
    <location>
        <begin position="102"/>
        <end position="109"/>
    </location>
    <ligand>
        <name>ATP</name>
        <dbReference type="ChEBI" id="CHEBI:30616"/>
    </ligand>
</feature>
<comment type="function">
    <text evidence="2">ATP-dependent DNA helicase involved in DNA damage repair by homologous recombination and in genome maintenance. Capable of unwinding D-loops. Plays a role in limiting crossover recombinants during mitotic DNA double-strand break (DSB) repair. Component of a FANCM-MHF complex which promotes gene conversion at blocked replication forks, probably by reversal of the stalled fork.</text>
</comment>
<comment type="catalytic activity">
    <reaction evidence="2">
        <text>ATP + H2O = ADP + phosphate + H(+)</text>
        <dbReference type="Rhea" id="RHEA:13065"/>
        <dbReference type="ChEBI" id="CHEBI:15377"/>
        <dbReference type="ChEBI" id="CHEBI:15378"/>
        <dbReference type="ChEBI" id="CHEBI:30616"/>
        <dbReference type="ChEBI" id="CHEBI:43474"/>
        <dbReference type="ChEBI" id="CHEBI:456216"/>
        <dbReference type="EC" id="3.6.4.12"/>
    </reaction>
</comment>
<comment type="subunit">
    <text evidence="2">Interacts with the MHF histone-fold complex to form the FANCM-MHF complex.</text>
</comment>
<comment type="subcellular location">
    <subcellularLocation>
        <location evidence="1">Nucleus</location>
    </subcellularLocation>
</comment>
<comment type="similarity">
    <text evidence="6">Belongs to the DEAD box helicase family. DEAH subfamily. FANCM sub-subfamily.</text>
</comment>
<keyword id="KW-0067">ATP-binding</keyword>
<keyword id="KW-0227">DNA damage</keyword>
<keyword id="KW-0234">DNA repair</keyword>
<keyword id="KW-0238">DNA-binding</keyword>
<keyword id="KW-0347">Helicase</keyword>
<keyword id="KW-0378">Hydrolase</keyword>
<keyword id="KW-0547">Nucleotide-binding</keyword>
<keyword id="KW-0539">Nucleus</keyword>
<keyword id="KW-1185">Reference proteome</keyword>
<proteinExistence type="inferred from homology"/>
<name>MPH1_CANGA</name>
<accession>Q6FPQ3</accession>
<reference key="1">
    <citation type="journal article" date="2004" name="Nature">
        <title>Genome evolution in yeasts.</title>
        <authorList>
            <person name="Dujon B."/>
            <person name="Sherman D."/>
            <person name="Fischer G."/>
            <person name="Durrens P."/>
            <person name="Casaregola S."/>
            <person name="Lafontaine I."/>
            <person name="de Montigny J."/>
            <person name="Marck C."/>
            <person name="Neuveglise C."/>
            <person name="Talla E."/>
            <person name="Goffard N."/>
            <person name="Frangeul L."/>
            <person name="Aigle M."/>
            <person name="Anthouard V."/>
            <person name="Babour A."/>
            <person name="Barbe V."/>
            <person name="Barnay S."/>
            <person name="Blanchin S."/>
            <person name="Beckerich J.-M."/>
            <person name="Beyne E."/>
            <person name="Bleykasten C."/>
            <person name="Boisrame A."/>
            <person name="Boyer J."/>
            <person name="Cattolico L."/>
            <person name="Confanioleri F."/>
            <person name="de Daruvar A."/>
            <person name="Despons L."/>
            <person name="Fabre E."/>
            <person name="Fairhead C."/>
            <person name="Ferry-Dumazet H."/>
            <person name="Groppi A."/>
            <person name="Hantraye F."/>
            <person name="Hennequin C."/>
            <person name="Jauniaux N."/>
            <person name="Joyet P."/>
            <person name="Kachouri R."/>
            <person name="Kerrest A."/>
            <person name="Koszul R."/>
            <person name="Lemaire M."/>
            <person name="Lesur I."/>
            <person name="Ma L."/>
            <person name="Muller H."/>
            <person name="Nicaud J.-M."/>
            <person name="Nikolski M."/>
            <person name="Oztas S."/>
            <person name="Ozier-Kalogeropoulos O."/>
            <person name="Pellenz S."/>
            <person name="Potier S."/>
            <person name="Richard G.-F."/>
            <person name="Straub M.-L."/>
            <person name="Suleau A."/>
            <person name="Swennen D."/>
            <person name="Tekaia F."/>
            <person name="Wesolowski-Louvel M."/>
            <person name="Westhof E."/>
            <person name="Wirth B."/>
            <person name="Zeniou-Meyer M."/>
            <person name="Zivanovic Y."/>
            <person name="Bolotin-Fukuhara M."/>
            <person name="Thierry A."/>
            <person name="Bouchier C."/>
            <person name="Caudron B."/>
            <person name="Scarpelli C."/>
            <person name="Gaillardin C."/>
            <person name="Weissenbach J."/>
            <person name="Wincker P."/>
            <person name="Souciet J.-L."/>
        </authorList>
    </citation>
    <scope>NUCLEOTIDE SEQUENCE [LARGE SCALE GENOMIC DNA]</scope>
    <source>
        <strain>ATCC 2001 / BCRC 20586 / JCM 3761 / NBRC 0622 / NRRL Y-65 / CBS 138</strain>
    </source>
</reference>
<evidence type="ECO:0000250" key="1">
    <source>
        <dbReference type="UniProtKB" id="P40562"/>
    </source>
</evidence>
<evidence type="ECO:0000250" key="2">
    <source>
        <dbReference type="UniProtKB" id="Q9UT23"/>
    </source>
</evidence>
<evidence type="ECO:0000255" key="3">
    <source>
        <dbReference type="PROSITE-ProRule" id="PRU00541"/>
    </source>
</evidence>
<evidence type="ECO:0000255" key="4">
    <source>
        <dbReference type="PROSITE-ProRule" id="PRU00542"/>
    </source>
</evidence>
<evidence type="ECO:0000256" key="5">
    <source>
        <dbReference type="SAM" id="MobiDB-lite"/>
    </source>
</evidence>
<evidence type="ECO:0000305" key="6"/>
<sequence>MEDSDFDDAELDELYEKAINRRVNETLIRRSLPVQRDLQNGVVPGQDTYYEEIRTEVTFGPTHHQLNEELLHSYIYPTNFEVRDYQFDIVRKGLLQNILCAIPTGMGKTFIASTVMLNFFRWTKTAKIIFTAPTRPLVAQQIKACLGITGIPHDQTAILLDKTRKNREEIWANKRVFFTTPQVVENDLKRGVLNPKDIVCLVIDEAHRATGSYAYANLVKFINRFNSSYRLLALTATPATDIEGVQEVVNNLNISKIEIRTEESMDIVKYMKKKIKDRVNIQTTVEIENIVEQLGIAILPVLNQAVELGIYESCPPSAINAFKAMQKSQAIIMNPSIPEGIKWRNYFILQLLNHVGQMLKRIKIYGIRTFFSYFQNKVKEFTTKYDLGKSTNKIAAGFYYHPMIQAITKECEEKIKDPNFLGHGKLEHLRDELTQFFYENPFESRVIIFTELRESALEIVKCIDSMENSEIRPHIFIGQAKGKEGFDEVKFVRKHGPKGRKKSDREKRLEEERRMDEEKKQAALQEKLERTSRRTGSSEEAQLSGMNQKQQKEVIKKFKSGLYNVLVCTSIGEEGLDIGEVDLIICYDTTSSPIKNIQRMGRTGRKRDGRIVLMFSSNEASKFDQSMNDYYNLQKLISQHLVQYRKSDRILPPENQEPECEKKFIEVSEEDQELNNMEDTDDVIRFATQCMLGKIPKTKKGRDKGKAKKGKTFFMPDNVITGIITANNLVRKRKSAQNGSGAALLDSIVNDDIDLEDEDGQVEILDVDQEVNRRLASNAVQKTNDMALQIRNEETPEIGDTRNKAKASSSMKVKKEPTMAVDHSDDEEDLPLSRHVERASRETAKEVPNATNVAEKPFPPLEFGVQRPSKRQRLQPEVQPEVQPEVQPEVQPEVQPEVQPEVTVKPEVKIKTEEGSKLYKNIFFSDEGFLQPHEKELFLSKYNPEDATVTIEPVPRFVRAHGRVKHSKRTEQLITLFEDMNHNRVARTIEMNKLRGIARRLHTVSQSQGQSNSQSQAHSTSQKSQQASQKDRSSQDKDLTNSELEDLLDSDF</sequence>